<evidence type="ECO:0000255" key="1">
    <source>
        <dbReference type="HAMAP-Rule" id="MF_00344"/>
    </source>
</evidence>
<gene>
    <name evidence="1" type="primary">guaA</name>
    <name type="ordered locus">SG2542</name>
</gene>
<reference key="1">
    <citation type="journal article" date="2008" name="Genome Res.">
        <title>Comparative genome analysis of Salmonella enteritidis PT4 and Salmonella gallinarum 287/91 provides insights into evolutionary and host adaptation pathways.</title>
        <authorList>
            <person name="Thomson N.R."/>
            <person name="Clayton D.J."/>
            <person name="Windhorst D."/>
            <person name="Vernikos G."/>
            <person name="Davidson S."/>
            <person name="Churcher C."/>
            <person name="Quail M.A."/>
            <person name="Stevens M."/>
            <person name="Jones M.A."/>
            <person name="Watson M."/>
            <person name="Barron A."/>
            <person name="Layton A."/>
            <person name="Pickard D."/>
            <person name="Kingsley R.A."/>
            <person name="Bignell A."/>
            <person name="Clark L."/>
            <person name="Harris B."/>
            <person name="Ormond D."/>
            <person name="Abdellah Z."/>
            <person name="Brooks K."/>
            <person name="Cherevach I."/>
            <person name="Chillingworth T."/>
            <person name="Woodward J."/>
            <person name="Norberczak H."/>
            <person name="Lord A."/>
            <person name="Arrowsmith C."/>
            <person name="Jagels K."/>
            <person name="Moule S."/>
            <person name="Mungall K."/>
            <person name="Saunders M."/>
            <person name="Whitehead S."/>
            <person name="Chabalgoity J.A."/>
            <person name="Maskell D."/>
            <person name="Humphreys T."/>
            <person name="Roberts M."/>
            <person name="Barrow P.A."/>
            <person name="Dougan G."/>
            <person name="Parkhill J."/>
        </authorList>
    </citation>
    <scope>NUCLEOTIDE SEQUENCE [LARGE SCALE GENOMIC DNA]</scope>
    <source>
        <strain>287/91 / NCTC 13346</strain>
    </source>
</reference>
<keyword id="KW-0067">ATP-binding</keyword>
<keyword id="KW-0315">Glutamine amidotransferase</keyword>
<keyword id="KW-0332">GMP biosynthesis</keyword>
<keyword id="KW-0436">Ligase</keyword>
<keyword id="KW-0547">Nucleotide-binding</keyword>
<keyword id="KW-0658">Purine biosynthesis</keyword>
<protein>
    <recommendedName>
        <fullName evidence="1">GMP synthase [glutamine-hydrolyzing]</fullName>
        <ecNumber evidence="1">6.3.5.2</ecNumber>
    </recommendedName>
    <alternativeName>
        <fullName evidence="1">GMP synthetase</fullName>
    </alternativeName>
    <alternativeName>
        <fullName evidence="1">Glutamine amidotransferase</fullName>
    </alternativeName>
</protein>
<dbReference type="EC" id="6.3.5.2" evidence="1"/>
<dbReference type="EMBL" id="AM933173">
    <property type="protein sequence ID" value="CAR38365.1"/>
    <property type="molecule type" value="Genomic_DNA"/>
</dbReference>
<dbReference type="RefSeq" id="WP_000138293.1">
    <property type="nucleotide sequence ID" value="NC_011274.1"/>
</dbReference>
<dbReference type="SMR" id="B5RCX9"/>
<dbReference type="MEROPS" id="C26.957"/>
<dbReference type="KEGG" id="seg:SG2542"/>
<dbReference type="HOGENOM" id="CLU_014340_0_5_6"/>
<dbReference type="UniPathway" id="UPA00189">
    <property type="reaction ID" value="UER00296"/>
</dbReference>
<dbReference type="Proteomes" id="UP000008321">
    <property type="component" value="Chromosome"/>
</dbReference>
<dbReference type="GO" id="GO:0005829">
    <property type="term" value="C:cytosol"/>
    <property type="evidence" value="ECO:0007669"/>
    <property type="project" value="TreeGrafter"/>
</dbReference>
<dbReference type="GO" id="GO:0005524">
    <property type="term" value="F:ATP binding"/>
    <property type="evidence" value="ECO:0007669"/>
    <property type="project" value="UniProtKB-UniRule"/>
</dbReference>
<dbReference type="GO" id="GO:0003921">
    <property type="term" value="F:GMP synthase activity"/>
    <property type="evidence" value="ECO:0007669"/>
    <property type="project" value="InterPro"/>
</dbReference>
<dbReference type="CDD" id="cd01742">
    <property type="entry name" value="GATase1_GMP_Synthase"/>
    <property type="match status" value="1"/>
</dbReference>
<dbReference type="CDD" id="cd01997">
    <property type="entry name" value="GMP_synthase_C"/>
    <property type="match status" value="1"/>
</dbReference>
<dbReference type="FunFam" id="3.30.300.10:FF:000002">
    <property type="entry name" value="GMP synthase [glutamine-hydrolyzing]"/>
    <property type="match status" value="1"/>
</dbReference>
<dbReference type="FunFam" id="3.40.50.620:FF:000001">
    <property type="entry name" value="GMP synthase [glutamine-hydrolyzing]"/>
    <property type="match status" value="1"/>
</dbReference>
<dbReference type="FunFam" id="3.40.50.880:FF:000001">
    <property type="entry name" value="GMP synthase [glutamine-hydrolyzing]"/>
    <property type="match status" value="1"/>
</dbReference>
<dbReference type="Gene3D" id="3.30.300.10">
    <property type="match status" value="1"/>
</dbReference>
<dbReference type="Gene3D" id="3.40.50.880">
    <property type="match status" value="1"/>
</dbReference>
<dbReference type="Gene3D" id="3.40.50.620">
    <property type="entry name" value="HUPs"/>
    <property type="match status" value="1"/>
</dbReference>
<dbReference type="HAMAP" id="MF_00344">
    <property type="entry name" value="GMP_synthase"/>
    <property type="match status" value="1"/>
</dbReference>
<dbReference type="InterPro" id="IPR029062">
    <property type="entry name" value="Class_I_gatase-like"/>
</dbReference>
<dbReference type="InterPro" id="IPR017926">
    <property type="entry name" value="GATASE"/>
</dbReference>
<dbReference type="InterPro" id="IPR001674">
    <property type="entry name" value="GMP_synth_C"/>
</dbReference>
<dbReference type="InterPro" id="IPR004739">
    <property type="entry name" value="GMP_synth_GATase"/>
</dbReference>
<dbReference type="InterPro" id="IPR022955">
    <property type="entry name" value="GMP_synthase"/>
</dbReference>
<dbReference type="InterPro" id="IPR025777">
    <property type="entry name" value="GMPS_ATP_PPase_dom"/>
</dbReference>
<dbReference type="InterPro" id="IPR022310">
    <property type="entry name" value="NAD/GMP_synthase"/>
</dbReference>
<dbReference type="InterPro" id="IPR014729">
    <property type="entry name" value="Rossmann-like_a/b/a_fold"/>
</dbReference>
<dbReference type="NCBIfam" id="TIGR00884">
    <property type="entry name" value="guaA_Cterm"/>
    <property type="match status" value="1"/>
</dbReference>
<dbReference type="NCBIfam" id="TIGR00888">
    <property type="entry name" value="guaA_Nterm"/>
    <property type="match status" value="1"/>
</dbReference>
<dbReference type="NCBIfam" id="NF000848">
    <property type="entry name" value="PRK00074.1"/>
    <property type="match status" value="1"/>
</dbReference>
<dbReference type="PANTHER" id="PTHR11922:SF2">
    <property type="entry name" value="GMP SYNTHASE [GLUTAMINE-HYDROLYZING]"/>
    <property type="match status" value="1"/>
</dbReference>
<dbReference type="PANTHER" id="PTHR11922">
    <property type="entry name" value="GMP SYNTHASE-RELATED"/>
    <property type="match status" value="1"/>
</dbReference>
<dbReference type="Pfam" id="PF00117">
    <property type="entry name" value="GATase"/>
    <property type="match status" value="1"/>
</dbReference>
<dbReference type="Pfam" id="PF00958">
    <property type="entry name" value="GMP_synt_C"/>
    <property type="match status" value="1"/>
</dbReference>
<dbReference type="Pfam" id="PF02540">
    <property type="entry name" value="NAD_synthase"/>
    <property type="match status" value="1"/>
</dbReference>
<dbReference type="PRINTS" id="PR00097">
    <property type="entry name" value="ANTSNTHASEII"/>
</dbReference>
<dbReference type="PRINTS" id="PR00099">
    <property type="entry name" value="CPSGATASE"/>
</dbReference>
<dbReference type="PRINTS" id="PR00096">
    <property type="entry name" value="GATASE"/>
</dbReference>
<dbReference type="SUPFAM" id="SSF52402">
    <property type="entry name" value="Adenine nucleotide alpha hydrolases-like"/>
    <property type="match status" value="1"/>
</dbReference>
<dbReference type="SUPFAM" id="SSF52317">
    <property type="entry name" value="Class I glutamine amidotransferase-like"/>
    <property type="match status" value="1"/>
</dbReference>
<dbReference type="SUPFAM" id="SSF54810">
    <property type="entry name" value="GMP synthetase C-terminal dimerisation domain"/>
    <property type="match status" value="1"/>
</dbReference>
<dbReference type="PROSITE" id="PS51273">
    <property type="entry name" value="GATASE_TYPE_1"/>
    <property type="match status" value="1"/>
</dbReference>
<dbReference type="PROSITE" id="PS51553">
    <property type="entry name" value="GMPS_ATP_PPASE"/>
    <property type="match status" value="1"/>
</dbReference>
<proteinExistence type="inferred from homology"/>
<organism>
    <name type="scientific">Salmonella gallinarum (strain 287/91 / NCTC 13346)</name>
    <dbReference type="NCBI Taxonomy" id="550538"/>
    <lineage>
        <taxon>Bacteria</taxon>
        <taxon>Pseudomonadati</taxon>
        <taxon>Pseudomonadota</taxon>
        <taxon>Gammaproteobacteria</taxon>
        <taxon>Enterobacterales</taxon>
        <taxon>Enterobacteriaceae</taxon>
        <taxon>Salmonella</taxon>
    </lineage>
</organism>
<accession>B5RCX9</accession>
<sequence length="525" mass="58686">MTENIHKHRILILDFGSQYTQLVARRVRELGVYCELWAWDVTEAQIRDFNPSGIILSGGPESTTEENSPRAPQYVFEAGVPVFGVCYGMQTMAMQLGGHVEGSNEREFGYAQVEVLTDSALVRGIEDSLTADGKPLLDVWMSHGDKVTAIPSDFVTVASTESCPFAIMANEEKRFYGVQFHPEVTHTRQGMRMLERFVRDICQCEALWTPAKIIDDAVARIREQVGDDKVILGLSGGVDSSVTAMLLHRAIGKNLTCVFVDNGLLRLNEAEQVMDMFGDHFGLNIVHVPAEDRFLSALAGENDPEAKRKIIGRVFVEVFDEEALKLEDVKWLAQGTIYPDVIESAASATGKAHVIKSHHNVGGLPKEMKMGLVEPLKELFKDEVRKIGLELGLPYDMLYRHPFPGPGLGVRVLGEVKKEYCDLLRRADAIFIEELRKADLYDKVSQAFTVFLPVRSVGVMGDGRKYDWVVSLRAVETIDFMTAHWAHLPYDFLGRVSNRIINEVNGISRVVYDISGKPPATIEWE</sequence>
<comment type="function">
    <text evidence="1">Catalyzes the synthesis of GMP from XMP.</text>
</comment>
<comment type="catalytic activity">
    <reaction evidence="1">
        <text>XMP + L-glutamine + ATP + H2O = GMP + L-glutamate + AMP + diphosphate + 2 H(+)</text>
        <dbReference type="Rhea" id="RHEA:11680"/>
        <dbReference type="ChEBI" id="CHEBI:15377"/>
        <dbReference type="ChEBI" id="CHEBI:15378"/>
        <dbReference type="ChEBI" id="CHEBI:29985"/>
        <dbReference type="ChEBI" id="CHEBI:30616"/>
        <dbReference type="ChEBI" id="CHEBI:33019"/>
        <dbReference type="ChEBI" id="CHEBI:57464"/>
        <dbReference type="ChEBI" id="CHEBI:58115"/>
        <dbReference type="ChEBI" id="CHEBI:58359"/>
        <dbReference type="ChEBI" id="CHEBI:456215"/>
        <dbReference type="EC" id="6.3.5.2"/>
    </reaction>
</comment>
<comment type="pathway">
    <text evidence="1">Purine metabolism; GMP biosynthesis; GMP from XMP (L-Gln route): step 1/1.</text>
</comment>
<comment type="subunit">
    <text evidence="1">Homodimer.</text>
</comment>
<feature type="chain" id="PRO_1000120390" description="GMP synthase [glutamine-hydrolyzing]">
    <location>
        <begin position="1"/>
        <end position="525"/>
    </location>
</feature>
<feature type="domain" description="Glutamine amidotransferase type-1" evidence="1">
    <location>
        <begin position="9"/>
        <end position="207"/>
    </location>
</feature>
<feature type="domain" description="GMPS ATP-PPase" evidence="1">
    <location>
        <begin position="208"/>
        <end position="400"/>
    </location>
</feature>
<feature type="active site" description="Nucleophile" evidence="1">
    <location>
        <position position="86"/>
    </location>
</feature>
<feature type="active site" evidence="1">
    <location>
        <position position="181"/>
    </location>
</feature>
<feature type="active site" evidence="1">
    <location>
        <position position="183"/>
    </location>
</feature>
<feature type="binding site" evidence="1">
    <location>
        <begin position="235"/>
        <end position="241"/>
    </location>
    <ligand>
        <name>ATP</name>
        <dbReference type="ChEBI" id="CHEBI:30616"/>
    </ligand>
</feature>
<name>GUAA_SALG2</name>